<dbReference type="EC" id="2.8.1.10" evidence="1"/>
<dbReference type="EMBL" id="CP000155">
    <property type="protein sequence ID" value="ABC27059.1"/>
    <property type="molecule type" value="Genomic_DNA"/>
</dbReference>
<dbReference type="RefSeq" id="WP_011394136.1">
    <property type="nucleotide sequence ID" value="NC_007645.1"/>
</dbReference>
<dbReference type="SMR" id="Q2SQL5"/>
<dbReference type="STRING" id="349521.HCH_00140"/>
<dbReference type="KEGG" id="hch:HCH_00140"/>
<dbReference type="eggNOG" id="COG2022">
    <property type="taxonomic scope" value="Bacteria"/>
</dbReference>
<dbReference type="HOGENOM" id="CLU_062233_1_0_6"/>
<dbReference type="OrthoDB" id="9805935at2"/>
<dbReference type="UniPathway" id="UPA00060"/>
<dbReference type="Proteomes" id="UP000000238">
    <property type="component" value="Chromosome"/>
</dbReference>
<dbReference type="GO" id="GO:0005737">
    <property type="term" value="C:cytoplasm"/>
    <property type="evidence" value="ECO:0007669"/>
    <property type="project" value="UniProtKB-SubCell"/>
</dbReference>
<dbReference type="GO" id="GO:1990107">
    <property type="term" value="F:thiazole synthase activity"/>
    <property type="evidence" value="ECO:0007669"/>
    <property type="project" value="UniProtKB-EC"/>
</dbReference>
<dbReference type="GO" id="GO:0009229">
    <property type="term" value="P:thiamine diphosphate biosynthetic process"/>
    <property type="evidence" value="ECO:0007669"/>
    <property type="project" value="UniProtKB-UniRule"/>
</dbReference>
<dbReference type="CDD" id="cd04728">
    <property type="entry name" value="ThiG"/>
    <property type="match status" value="1"/>
</dbReference>
<dbReference type="Gene3D" id="3.20.20.70">
    <property type="entry name" value="Aldolase class I"/>
    <property type="match status" value="1"/>
</dbReference>
<dbReference type="HAMAP" id="MF_00443">
    <property type="entry name" value="ThiG"/>
    <property type="match status" value="1"/>
</dbReference>
<dbReference type="InterPro" id="IPR013785">
    <property type="entry name" value="Aldolase_TIM"/>
</dbReference>
<dbReference type="InterPro" id="IPR033983">
    <property type="entry name" value="Thiazole_synthase_ThiG"/>
</dbReference>
<dbReference type="InterPro" id="IPR008867">
    <property type="entry name" value="ThiG"/>
</dbReference>
<dbReference type="PANTHER" id="PTHR34266">
    <property type="entry name" value="THIAZOLE SYNTHASE"/>
    <property type="match status" value="1"/>
</dbReference>
<dbReference type="PANTHER" id="PTHR34266:SF2">
    <property type="entry name" value="THIAZOLE SYNTHASE"/>
    <property type="match status" value="1"/>
</dbReference>
<dbReference type="Pfam" id="PF05690">
    <property type="entry name" value="ThiG"/>
    <property type="match status" value="1"/>
</dbReference>
<dbReference type="SUPFAM" id="SSF110399">
    <property type="entry name" value="ThiG-like"/>
    <property type="match status" value="1"/>
</dbReference>
<keyword id="KW-0963">Cytoplasm</keyword>
<keyword id="KW-1185">Reference proteome</keyword>
<keyword id="KW-0704">Schiff base</keyword>
<keyword id="KW-0784">Thiamine biosynthesis</keyword>
<keyword id="KW-0808">Transferase</keyword>
<protein>
    <recommendedName>
        <fullName evidence="1">Thiazole synthase</fullName>
        <ecNumber evidence="1">2.8.1.10</ecNumber>
    </recommendedName>
</protein>
<proteinExistence type="inferred from homology"/>
<reference key="1">
    <citation type="journal article" date="2005" name="Nucleic Acids Res.">
        <title>Genomic blueprint of Hahella chejuensis, a marine microbe producing an algicidal agent.</title>
        <authorList>
            <person name="Jeong H."/>
            <person name="Yim J.H."/>
            <person name="Lee C."/>
            <person name="Choi S.-H."/>
            <person name="Park Y.K."/>
            <person name="Yoon S.H."/>
            <person name="Hur C.-G."/>
            <person name="Kang H.-Y."/>
            <person name="Kim D."/>
            <person name="Lee H.H."/>
            <person name="Park K.H."/>
            <person name="Park S.-H."/>
            <person name="Park H.-S."/>
            <person name="Lee H.K."/>
            <person name="Oh T.K."/>
            <person name="Kim J.F."/>
        </authorList>
    </citation>
    <scope>NUCLEOTIDE SEQUENCE [LARGE SCALE GENOMIC DNA]</scope>
    <source>
        <strain>KCTC 2396</strain>
    </source>
</reference>
<gene>
    <name evidence="1" type="primary">thiG</name>
    <name type="ordered locus">HCH_00140</name>
</gene>
<sequence>MDKLSLYGETFTSRLLIGSALYPSPAIMLDSVRASGAEIITLSLRRQNPAQQDGKAIWDYIRSSGCKLLPNTAGCKSAKEAVTLAEMSREIFQTDWLKLEVIGDDYTLQPDPYGLVEAAKELSKRGFKVLPYCTEDLVLCRRLLDAGCEALMPWGAPIGTGQGLLNKYNLGMLRERLPDTPMIIDAGLGAPSHATEAMEMGFDAVLLNTAIAKAHDPVGMGVAFKLAVEAGRAGYNAGLMLKRQTASPSTPTIGMPFWRRHD</sequence>
<organism>
    <name type="scientific">Hahella chejuensis (strain KCTC 2396)</name>
    <dbReference type="NCBI Taxonomy" id="349521"/>
    <lineage>
        <taxon>Bacteria</taxon>
        <taxon>Pseudomonadati</taxon>
        <taxon>Pseudomonadota</taxon>
        <taxon>Gammaproteobacteria</taxon>
        <taxon>Oceanospirillales</taxon>
        <taxon>Hahellaceae</taxon>
        <taxon>Hahella</taxon>
    </lineage>
</organism>
<comment type="function">
    <text evidence="1">Catalyzes the rearrangement of 1-deoxy-D-xylulose 5-phosphate (DXP) to produce the thiazole phosphate moiety of thiamine. Sulfur is provided by the thiocarboxylate moiety of the carrier protein ThiS. In vitro, sulfur can be provided by H(2)S.</text>
</comment>
<comment type="catalytic activity">
    <reaction evidence="1">
        <text>[ThiS sulfur-carrier protein]-C-terminal-Gly-aminoethanethioate + 2-iminoacetate + 1-deoxy-D-xylulose 5-phosphate = [ThiS sulfur-carrier protein]-C-terminal Gly-Gly + 2-[(2R,5Z)-2-carboxy-4-methylthiazol-5(2H)-ylidene]ethyl phosphate + 2 H2O + H(+)</text>
        <dbReference type="Rhea" id="RHEA:26297"/>
        <dbReference type="Rhea" id="RHEA-COMP:12909"/>
        <dbReference type="Rhea" id="RHEA-COMP:19908"/>
        <dbReference type="ChEBI" id="CHEBI:15377"/>
        <dbReference type="ChEBI" id="CHEBI:15378"/>
        <dbReference type="ChEBI" id="CHEBI:57792"/>
        <dbReference type="ChEBI" id="CHEBI:62899"/>
        <dbReference type="ChEBI" id="CHEBI:77846"/>
        <dbReference type="ChEBI" id="CHEBI:90778"/>
        <dbReference type="ChEBI" id="CHEBI:232372"/>
        <dbReference type="EC" id="2.8.1.10"/>
    </reaction>
</comment>
<comment type="pathway">
    <text evidence="1">Cofactor biosynthesis; thiamine diphosphate biosynthesis.</text>
</comment>
<comment type="subunit">
    <text evidence="1">Homotetramer. Forms heterodimers with either ThiH or ThiS.</text>
</comment>
<comment type="subcellular location">
    <subcellularLocation>
        <location evidence="1">Cytoplasm</location>
    </subcellularLocation>
</comment>
<comment type="similarity">
    <text evidence="1">Belongs to the ThiG family.</text>
</comment>
<evidence type="ECO:0000255" key="1">
    <source>
        <dbReference type="HAMAP-Rule" id="MF_00443"/>
    </source>
</evidence>
<feature type="chain" id="PRO_0000236342" description="Thiazole synthase">
    <location>
        <begin position="1"/>
        <end position="262"/>
    </location>
</feature>
<feature type="active site" description="Schiff-base intermediate with DXP" evidence="1">
    <location>
        <position position="98"/>
    </location>
</feature>
<feature type="binding site" evidence="1">
    <location>
        <position position="159"/>
    </location>
    <ligand>
        <name>1-deoxy-D-xylulose 5-phosphate</name>
        <dbReference type="ChEBI" id="CHEBI:57792"/>
    </ligand>
</feature>
<feature type="binding site" evidence="1">
    <location>
        <begin position="186"/>
        <end position="187"/>
    </location>
    <ligand>
        <name>1-deoxy-D-xylulose 5-phosphate</name>
        <dbReference type="ChEBI" id="CHEBI:57792"/>
    </ligand>
</feature>
<feature type="binding site" evidence="1">
    <location>
        <begin position="208"/>
        <end position="209"/>
    </location>
    <ligand>
        <name>1-deoxy-D-xylulose 5-phosphate</name>
        <dbReference type="ChEBI" id="CHEBI:57792"/>
    </ligand>
</feature>
<accession>Q2SQL5</accession>
<name>THIG_HAHCH</name>